<proteinExistence type="inferred from homology"/>
<accession>Q98KS5</accession>
<protein>
    <recommendedName>
        <fullName evidence="1">Proline--tRNA ligase</fullName>
        <ecNumber evidence="1">6.1.1.15</ecNumber>
    </recommendedName>
    <alternativeName>
        <fullName evidence="1">Prolyl-tRNA synthetase</fullName>
        <shortName evidence="1">ProRS</shortName>
    </alternativeName>
</protein>
<feature type="chain" id="PRO_0000248908" description="Proline--tRNA ligase">
    <location>
        <begin position="1"/>
        <end position="442"/>
    </location>
</feature>
<dbReference type="EC" id="6.1.1.15" evidence="1"/>
<dbReference type="EMBL" id="BA000012">
    <property type="protein sequence ID" value="BAB48739.1"/>
    <property type="molecule type" value="Genomic_DNA"/>
</dbReference>
<dbReference type="RefSeq" id="WP_010910092.1">
    <property type="nucleotide sequence ID" value="NC_002678.2"/>
</dbReference>
<dbReference type="SMR" id="Q98KS5"/>
<dbReference type="KEGG" id="mlo:mll1344"/>
<dbReference type="PATRIC" id="fig|266835.9.peg.1084"/>
<dbReference type="eggNOG" id="COG0442">
    <property type="taxonomic scope" value="Bacteria"/>
</dbReference>
<dbReference type="HOGENOM" id="CLU_016739_4_2_5"/>
<dbReference type="Proteomes" id="UP000000552">
    <property type="component" value="Chromosome"/>
</dbReference>
<dbReference type="GO" id="GO:0005829">
    <property type="term" value="C:cytosol"/>
    <property type="evidence" value="ECO:0007669"/>
    <property type="project" value="TreeGrafter"/>
</dbReference>
<dbReference type="GO" id="GO:0005524">
    <property type="term" value="F:ATP binding"/>
    <property type="evidence" value="ECO:0007669"/>
    <property type="project" value="UniProtKB-UniRule"/>
</dbReference>
<dbReference type="GO" id="GO:0004827">
    <property type="term" value="F:proline-tRNA ligase activity"/>
    <property type="evidence" value="ECO:0007669"/>
    <property type="project" value="UniProtKB-UniRule"/>
</dbReference>
<dbReference type="GO" id="GO:0006433">
    <property type="term" value="P:prolyl-tRNA aminoacylation"/>
    <property type="evidence" value="ECO:0007669"/>
    <property type="project" value="UniProtKB-UniRule"/>
</dbReference>
<dbReference type="CDD" id="cd00861">
    <property type="entry name" value="ProRS_anticodon_short"/>
    <property type="match status" value="1"/>
</dbReference>
<dbReference type="CDD" id="cd00779">
    <property type="entry name" value="ProRS_core_prok"/>
    <property type="match status" value="1"/>
</dbReference>
<dbReference type="FunFam" id="3.30.930.10:FF:000042">
    <property type="entry name" value="probable proline--tRNA ligase, mitochondrial"/>
    <property type="match status" value="1"/>
</dbReference>
<dbReference type="FunFam" id="3.40.50.800:FF:000032">
    <property type="entry name" value="Proline--tRNA ligase"/>
    <property type="match status" value="1"/>
</dbReference>
<dbReference type="Gene3D" id="3.40.50.800">
    <property type="entry name" value="Anticodon-binding domain"/>
    <property type="match status" value="1"/>
</dbReference>
<dbReference type="Gene3D" id="3.30.930.10">
    <property type="entry name" value="Bira Bifunctional Protein, Domain 2"/>
    <property type="match status" value="1"/>
</dbReference>
<dbReference type="HAMAP" id="MF_01570">
    <property type="entry name" value="Pro_tRNA_synth_type2"/>
    <property type="match status" value="1"/>
</dbReference>
<dbReference type="InterPro" id="IPR002314">
    <property type="entry name" value="aa-tRNA-synt_IIb"/>
</dbReference>
<dbReference type="InterPro" id="IPR006195">
    <property type="entry name" value="aa-tRNA-synth_II"/>
</dbReference>
<dbReference type="InterPro" id="IPR045864">
    <property type="entry name" value="aa-tRNA-synth_II/BPL/LPL"/>
</dbReference>
<dbReference type="InterPro" id="IPR004154">
    <property type="entry name" value="Anticodon-bd"/>
</dbReference>
<dbReference type="InterPro" id="IPR036621">
    <property type="entry name" value="Anticodon-bd_dom_sf"/>
</dbReference>
<dbReference type="InterPro" id="IPR002316">
    <property type="entry name" value="Pro-tRNA-ligase_IIa"/>
</dbReference>
<dbReference type="InterPro" id="IPR004500">
    <property type="entry name" value="Pro-tRNA-synth_IIa_bac-type"/>
</dbReference>
<dbReference type="InterPro" id="IPR050062">
    <property type="entry name" value="Pro-tRNA_synthetase"/>
</dbReference>
<dbReference type="InterPro" id="IPR023716">
    <property type="entry name" value="Prolyl-tRNA_ligase_IIa_type2"/>
</dbReference>
<dbReference type="InterPro" id="IPR044140">
    <property type="entry name" value="ProRS_anticodon_short"/>
</dbReference>
<dbReference type="InterPro" id="IPR033730">
    <property type="entry name" value="ProRS_core_prok"/>
</dbReference>
<dbReference type="NCBIfam" id="NF008979">
    <property type="entry name" value="PRK12325.1"/>
    <property type="match status" value="1"/>
</dbReference>
<dbReference type="NCBIfam" id="TIGR00409">
    <property type="entry name" value="proS_fam_II"/>
    <property type="match status" value="1"/>
</dbReference>
<dbReference type="PANTHER" id="PTHR42753">
    <property type="entry name" value="MITOCHONDRIAL RIBOSOME PROTEIN L39/PROLYL-TRNA LIGASE FAMILY MEMBER"/>
    <property type="match status" value="1"/>
</dbReference>
<dbReference type="PANTHER" id="PTHR42753:SF2">
    <property type="entry name" value="PROLINE--TRNA LIGASE"/>
    <property type="match status" value="1"/>
</dbReference>
<dbReference type="Pfam" id="PF03129">
    <property type="entry name" value="HGTP_anticodon"/>
    <property type="match status" value="1"/>
</dbReference>
<dbReference type="Pfam" id="PF00587">
    <property type="entry name" value="tRNA-synt_2b"/>
    <property type="match status" value="1"/>
</dbReference>
<dbReference type="PRINTS" id="PR01046">
    <property type="entry name" value="TRNASYNTHPRO"/>
</dbReference>
<dbReference type="SUPFAM" id="SSF52954">
    <property type="entry name" value="Class II aaRS ABD-related"/>
    <property type="match status" value="1"/>
</dbReference>
<dbReference type="SUPFAM" id="SSF55681">
    <property type="entry name" value="Class II aaRS and biotin synthetases"/>
    <property type="match status" value="1"/>
</dbReference>
<dbReference type="PROSITE" id="PS50862">
    <property type="entry name" value="AA_TRNA_LIGASE_II"/>
    <property type="match status" value="1"/>
</dbReference>
<evidence type="ECO:0000255" key="1">
    <source>
        <dbReference type="HAMAP-Rule" id="MF_01570"/>
    </source>
</evidence>
<reference key="1">
    <citation type="journal article" date="2000" name="DNA Res.">
        <title>Complete genome structure of the nitrogen-fixing symbiotic bacterium Mesorhizobium loti.</title>
        <authorList>
            <person name="Kaneko T."/>
            <person name="Nakamura Y."/>
            <person name="Sato S."/>
            <person name="Asamizu E."/>
            <person name="Kato T."/>
            <person name="Sasamoto S."/>
            <person name="Watanabe A."/>
            <person name="Idesawa K."/>
            <person name="Ishikawa A."/>
            <person name="Kawashima K."/>
            <person name="Kimura T."/>
            <person name="Kishida Y."/>
            <person name="Kiyokawa C."/>
            <person name="Kohara M."/>
            <person name="Matsumoto M."/>
            <person name="Matsuno A."/>
            <person name="Mochizuki Y."/>
            <person name="Nakayama S."/>
            <person name="Nakazaki N."/>
            <person name="Shimpo S."/>
            <person name="Sugimoto M."/>
            <person name="Takeuchi C."/>
            <person name="Yamada M."/>
            <person name="Tabata S."/>
        </authorList>
    </citation>
    <scope>NUCLEOTIDE SEQUENCE [LARGE SCALE GENOMIC DNA]</scope>
    <source>
        <strain>LMG 29417 / CECT 9101 / MAFF 303099</strain>
    </source>
</reference>
<sequence length="442" mass="49630">MRLSRYFLPILKENPREAEIVSHRLMLRAGMIRQQGQGSFSWLPLGKRVLDKVCQIIREEQNRAGALEILMPTIQSADLWRESGRYNDYGKEMLRIKDRQDRDMLYGPTNEEMVTEIFRAYVKSYKDLPLNLYHIQWKFRDEVRPRFGVMRSREFLMKDAYSFDLDFEGARSAYNRMFVSYLRTFTRMGLQAIPMRADTGPIGGDLSHEFIILADTGESQVFCHRDYLSLAVPGANTDFANDGEIADIVKTWTTPYAATDEMHDEAAWEKVPESDKVSARGIEVGHIFHFGEKYSKPMGAKVTGPDGKDHFASGGSYGIGPSRLVAAIIEASHDENGIIWPDAVAPFDIGLINMKVGDADCDRVSEELNAAFTAAGKDVLYDDTDQRPGGKFATADLIGLPWQVIVGPRGVAAGEVEIKNRRTGERETLPIADAKKRFGVAA</sequence>
<name>SYP_RHILO</name>
<organism>
    <name type="scientific">Mesorhizobium japonicum (strain LMG 29417 / CECT 9101 / MAFF 303099)</name>
    <name type="common">Mesorhizobium loti (strain MAFF 303099)</name>
    <dbReference type="NCBI Taxonomy" id="266835"/>
    <lineage>
        <taxon>Bacteria</taxon>
        <taxon>Pseudomonadati</taxon>
        <taxon>Pseudomonadota</taxon>
        <taxon>Alphaproteobacteria</taxon>
        <taxon>Hyphomicrobiales</taxon>
        <taxon>Phyllobacteriaceae</taxon>
        <taxon>Mesorhizobium</taxon>
    </lineage>
</organism>
<comment type="function">
    <text evidence="1">Catalyzes the attachment of proline to tRNA(Pro) in a two-step reaction: proline is first activated by ATP to form Pro-AMP and then transferred to the acceptor end of tRNA(Pro).</text>
</comment>
<comment type="catalytic activity">
    <reaction evidence="1">
        <text>tRNA(Pro) + L-proline + ATP = L-prolyl-tRNA(Pro) + AMP + diphosphate</text>
        <dbReference type="Rhea" id="RHEA:14305"/>
        <dbReference type="Rhea" id="RHEA-COMP:9700"/>
        <dbReference type="Rhea" id="RHEA-COMP:9702"/>
        <dbReference type="ChEBI" id="CHEBI:30616"/>
        <dbReference type="ChEBI" id="CHEBI:33019"/>
        <dbReference type="ChEBI" id="CHEBI:60039"/>
        <dbReference type="ChEBI" id="CHEBI:78442"/>
        <dbReference type="ChEBI" id="CHEBI:78532"/>
        <dbReference type="ChEBI" id="CHEBI:456215"/>
        <dbReference type="EC" id="6.1.1.15"/>
    </reaction>
</comment>
<comment type="subunit">
    <text evidence="1">Homodimer.</text>
</comment>
<comment type="subcellular location">
    <subcellularLocation>
        <location evidence="1">Cytoplasm</location>
    </subcellularLocation>
</comment>
<comment type="similarity">
    <text evidence="1">Belongs to the class-II aminoacyl-tRNA synthetase family. ProS type 2 subfamily.</text>
</comment>
<keyword id="KW-0030">Aminoacyl-tRNA synthetase</keyword>
<keyword id="KW-0067">ATP-binding</keyword>
<keyword id="KW-0963">Cytoplasm</keyword>
<keyword id="KW-0436">Ligase</keyword>
<keyword id="KW-0547">Nucleotide-binding</keyword>
<keyword id="KW-0648">Protein biosynthesis</keyword>
<gene>
    <name evidence="1" type="primary">proS</name>
    <name type="ordered locus">mll1344</name>
</gene>